<dbReference type="EC" id="2.5.1.6" evidence="1"/>
<dbReference type="EMBL" id="CP000319">
    <property type="protein sequence ID" value="ABE63532.1"/>
    <property type="molecule type" value="Genomic_DNA"/>
</dbReference>
<dbReference type="RefSeq" id="WP_011511198.1">
    <property type="nucleotide sequence ID" value="NC_007964.1"/>
</dbReference>
<dbReference type="SMR" id="Q1QJR5"/>
<dbReference type="STRING" id="323097.Nham_2753"/>
<dbReference type="KEGG" id="nha:Nham_2753"/>
<dbReference type="eggNOG" id="COG0192">
    <property type="taxonomic scope" value="Bacteria"/>
</dbReference>
<dbReference type="HOGENOM" id="CLU_041802_1_1_5"/>
<dbReference type="OrthoDB" id="9801686at2"/>
<dbReference type="UniPathway" id="UPA00315">
    <property type="reaction ID" value="UER00080"/>
</dbReference>
<dbReference type="Proteomes" id="UP000001953">
    <property type="component" value="Chromosome"/>
</dbReference>
<dbReference type="GO" id="GO:0005737">
    <property type="term" value="C:cytoplasm"/>
    <property type="evidence" value="ECO:0007669"/>
    <property type="project" value="UniProtKB-SubCell"/>
</dbReference>
<dbReference type="GO" id="GO:0005524">
    <property type="term" value="F:ATP binding"/>
    <property type="evidence" value="ECO:0007669"/>
    <property type="project" value="UniProtKB-UniRule"/>
</dbReference>
<dbReference type="GO" id="GO:0000287">
    <property type="term" value="F:magnesium ion binding"/>
    <property type="evidence" value="ECO:0007669"/>
    <property type="project" value="UniProtKB-UniRule"/>
</dbReference>
<dbReference type="GO" id="GO:0004478">
    <property type="term" value="F:methionine adenosyltransferase activity"/>
    <property type="evidence" value="ECO:0007669"/>
    <property type="project" value="UniProtKB-UniRule"/>
</dbReference>
<dbReference type="GO" id="GO:0006730">
    <property type="term" value="P:one-carbon metabolic process"/>
    <property type="evidence" value="ECO:0007669"/>
    <property type="project" value="UniProtKB-KW"/>
</dbReference>
<dbReference type="GO" id="GO:0006556">
    <property type="term" value="P:S-adenosylmethionine biosynthetic process"/>
    <property type="evidence" value="ECO:0007669"/>
    <property type="project" value="UniProtKB-UniRule"/>
</dbReference>
<dbReference type="CDD" id="cd18079">
    <property type="entry name" value="S-AdoMet_synt"/>
    <property type="match status" value="1"/>
</dbReference>
<dbReference type="FunFam" id="3.30.300.10:FF:000003">
    <property type="entry name" value="S-adenosylmethionine synthase"/>
    <property type="match status" value="1"/>
</dbReference>
<dbReference type="Gene3D" id="3.30.300.10">
    <property type="match status" value="3"/>
</dbReference>
<dbReference type="HAMAP" id="MF_00086">
    <property type="entry name" value="S_AdoMet_synth1"/>
    <property type="match status" value="1"/>
</dbReference>
<dbReference type="InterPro" id="IPR022631">
    <property type="entry name" value="ADOMET_SYNTHASE_CS"/>
</dbReference>
<dbReference type="InterPro" id="IPR022630">
    <property type="entry name" value="S-AdoMet_synt_C"/>
</dbReference>
<dbReference type="InterPro" id="IPR022629">
    <property type="entry name" value="S-AdoMet_synt_central"/>
</dbReference>
<dbReference type="InterPro" id="IPR022628">
    <property type="entry name" value="S-AdoMet_synt_N"/>
</dbReference>
<dbReference type="InterPro" id="IPR002133">
    <property type="entry name" value="S-AdoMet_synthetase"/>
</dbReference>
<dbReference type="InterPro" id="IPR022636">
    <property type="entry name" value="S-AdoMet_synthetase_sfam"/>
</dbReference>
<dbReference type="NCBIfam" id="TIGR01034">
    <property type="entry name" value="metK"/>
    <property type="match status" value="1"/>
</dbReference>
<dbReference type="PANTHER" id="PTHR11964">
    <property type="entry name" value="S-ADENOSYLMETHIONINE SYNTHETASE"/>
    <property type="match status" value="1"/>
</dbReference>
<dbReference type="Pfam" id="PF02773">
    <property type="entry name" value="S-AdoMet_synt_C"/>
    <property type="match status" value="1"/>
</dbReference>
<dbReference type="Pfam" id="PF02772">
    <property type="entry name" value="S-AdoMet_synt_M"/>
    <property type="match status" value="1"/>
</dbReference>
<dbReference type="Pfam" id="PF00438">
    <property type="entry name" value="S-AdoMet_synt_N"/>
    <property type="match status" value="1"/>
</dbReference>
<dbReference type="PIRSF" id="PIRSF000497">
    <property type="entry name" value="MAT"/>
    <property type="match status" value="1"/>
</dbReference>
<dbReference type="SUPFAM" id="SSF55973">
    <property type="entry name" value="S-adenosylmethionine synthetase"/>
    <property type="match status" value="3"/>
</dbReference>
<dbReference type="PROSITE" id="PS00376">
    <property type="entry name" value="ADOMET_SYNTHASE_1"/>
    <property type="match status" value="1"/>
</dbReference>
<dbReference type="PROSITE" id="PS00377">
    <property type="entry name" value="ADOMET_SYNTHASE_2"/>
    <property type="match status" value="1"/>
</dbReference>
<keyword id="KW-0067">ATP-binding</keyword>
<keyword id="KW-0963">Cytoplasm</keyword>
<keyword id="KW-0460">Magnesium</keyword>
<keyword id="KW-0479">Metal-binding</keyword>
<keyword id="KW-0547">Nucleotide-binding</keyword>
<keyword id="KW-0554">One-carbon metabolism</keyword>
<keyword id="KW-0630">Potassium</keyword>
<keyword id="KW-1185">Reference proteome</keyword>
<keyword id="KW-0808">Transferase</keyword>
<proteinExistence type="inferred from homology"/>
<organism>
    <name type="scientific">Nitrobacter hamburgensis (strain DSM 10229 / NCIMB 13809 / X14)</name>
    <dbReference type="NCBI Taxonomy" id="323097"/>
    <lineage>
        <taxon>Bacteria</taxon>
        <taxon>Pseudomonadati</taxon>
        <taxon>Pseudomonadota</taxon>
        <taxon>Alphaproteobacteria</taxon>
        <taxon>Hyphomicrobiales</taxon>
        <taxon>Nitrobacteraceae</taxon>
        <taxon>Nitrobacter</taxon>
    </lineage>
</organism>
<protein>
    <recommendedName>
        <fullName evidence="1">S-adenosylmethionine synthase</fullName>
        <shortName evidence="1">AdoMet synthase</shortName>
        <ecNumber evidence="1">2.5.1.6</ecNumber>
    </recommendedName>
    <alternativeName>
        <fullName evidence="1">MAT</fullName>
    </alternativeName>
    <alternativeName>
        <fullName evidence="1">Methionine adenosyltransferase</fullName>
    </alternativeName>
</protein>
<reference key="1">
    <citation type="submission" date="2006-03" db="EMBL/GenBank/DDBJ databases">
        <title>Complete sequence of chromosome of Nitrobacter hamburgensis X14.</title>
        <authorList>
            <consortium name="US DOE Joint Genome Institute"/>
            <person name="Copeland A."/>
            <person name="Lucas S."/>
            <person name="Lapidus A."/>
            <person name="Barry K."/>
            <person name="Detter J.C."/>
            <person name="Glavina del Rio T."/>
            <person name="Hammon N."/>
            <person name="Israni S."/>
            <person name="Dalin E."/>
            <person name="Tice H."/>
            <person name="Pitluck S."/>
            <person name="Chain P."/>
            <person name="Malfatti S."/>
            <person name="Shin M."/>
            <person name="Vergez L."/>
            <person name="Schmutz J."/>
            <person name="Larimer F."/>
            <person name="Land M."/>
            <person name="Hauser L."/>
            <person name="Kyrpides N."/>
            <person name="Ivanova N."/>
            <person name="Ward B."/>
            <person name="Arp D."/>
            <person name="Klotz M."/>
            <person name="Stein L."/>
            <person name="O'Mullan G."/>
            <person name="Starkenburg S."/>
            <person name="Sayavedra L."/>
            <person name="Poret-Peterson A.T."/>
            <person name="Gentry M.E."/>
            <person name="Bruce D."/>
            <person name="Richardson P."/>
        </authorList>
    </citation>
    <scope>NUCLEOTIDE SEQUENCE [LARGE SCALE GENOMIC DNA]</scope>
    <source>
        <strain>DSM 10229 / NCIMB 13809 / X14</strain>
    </source>
</reference>
<name>METK_NITHX</name>
<evidence type="ECO:0000255" key="1">
    <source>
        <dbReference type="HAMAP-Rule" id="MF_00086"/>
    </source>
</evidence>
<feature type="chain" id="PRO_0000302950" description="S-adenosylmethionine synthase">
    <location>
        <begin position="1"/>
        <end position="398"/>
    </location>
</feature>
<feature type="region of interest" description="Flexible loop" evidence="1">
    <location>
        <begin position="108"/>
        <end position="118"/>
    </location>
</feature>
<feature type="binding site" description="in other chain" evidence="1">
    <location>
        <position position="16"/>
    </location>
    <ligand>
        <name>ATP</name>
        <dbReference type="ChEBI" id="CHEBI:30616"/>
        <note>ligand shared between two neighboring subunits</note>
    </ligand>
</feature>
<feature type="binding site" evidence="1">
    <location>
        <position position="18"/>
    </location>
    <ligand>
        <name>Mg(2+)</name>
        <dbReference type="ChEBI" id="CHEBI:18420"/>
    </ligand>
</feature>
<feature type="binding site" evidence="1">
    <location>
        <position position="51"/>
    </location>
    <ligand>
        <name>K(+)</name>
        <dbReference type="ChEBI" id="CHEBI:29103"/>
    </ligand>
</feature>
<feature type="binding site" description="in other chain" evidence="1">
    <location>
        <position position="64"/>
    </location>
    <ligand>
        <name>L-methionine</name>
        <dbReference type="ChEBI" id="CHEBI:57844"/>
        <note>ligand shared between two neighboring subunits</note>
    </ligand>
</feature>
<feature type="binding site" description="in other chain" evidence="1">
    <location>
        <position position="108"/>
    </location>
    <ligand>
        <name>L-methionine</name>
        <dbReference type="ChEBI" id="CHEBI:57844"/>
        <note>ligand shared between two neighboring subunits</note>
    </ligand>
</feature>
<feature type="binding site" description="in other chain" evidence="1">
    <location>
        <begin position="176"/>
        <end position="178"/>
    </location>
    <ligand>
        <name>ATP</name>
        <dbReference type="ChEBI" id="CHEBI:30616"/>
        <note>ligand shared between two neighboring subunits</note>
    </ligand>
</feature>
<feature type="binding site" description="in other chain" evidence="1">
    <location>
        <begin position="242"/>
        <end position="243"/>
    </location>
    <ligand>
        <name>ATP</name>
        <dbReference type="ChEBI" id="CHEBI:30616"/>
        <note>ligand shared between two neighboring subunits</note>
    </ligand>
</feature>
<feature type="binding site" evidence="1">
    <location>
        <position position="251"/>
    </location>
    <ligand>
        <name>ATP</name>
        <dbReference type="ChEBI" id="CHEBI:30616"/>
        <note>ligand shared between two neighboring subunits</note>
    </ligand>
</feature>
<feature type="binding site" evidence="1">
    <location>
        <position position="251"/>
    </location>
    <ligand>
        <name>L-methionine</name>
        <dbReference type="ChEBI" id="CHEBI:57844"/>
        <note>ligand shared between two neighboring subunits</note>
    </ligand>
</feature>
<feature type="binding site" description="in other chain" evidence="1">
    <location>
        <begin position="257"/>
        <end position="258"/>
    </location>
    <ligand>
        <name>ATP</name>
        <dbReference type="ChEBI" id="CHEBI:30616"/>
        <note>ligand shared between two neighboring subunits</note>
    </ligand>
</feature>
<feature type="binding site" evidence="1">
    <location>
        <position position="274"/>
    </location>
    <ligand>
        <name>ATP</name>
        <dbReference type="ChEBI" id="CHEBI:30616"/>
        <note>ligand shared between two neighboring subunits</note>
    </ligand>
</feature>
<feature type="binding site" evidence="1">
    <location>
        <position position="278"/>
    </location>
    <ligand>
        <name>ATP</name>
        <dbReference type="ChEBI" id="CHEBI:30616"/>
        <note>ligand shared between two neighboring subunits</note>
    </ligand>
</feature>
<feature type="binding site" description="in other chain" evidence="1">
    <location>
        <position position="282"/>
    </location>
    <ligand>
        <name>L-methionine</name>
        <dbReference type="ChEBI" id="CHEBI:57844"/>
        <note>ligand shared between two neighboring subunits</note>
    </ligand>
</feature>
<sequence>MRGSYLFTSESVSEGHPDKVCDRISDEIVDLFFSEGPKAGVDPWAIRAACETLATTNKVVIAGETRGPESVTKEKIESVVRAAIKDIGYEQDGFHWKTADIDILLHPQSADIAQGVDALQPGANKEEGAGDQGIMFGYACNETPDLMPAPIFYAHKILRLISEARHSGKEKVLGPDSKSQVTVQYENGKPVGVREIVVSHQHLIEDMSSDQVRERVEPYVREALPKAWVTDKTIWHINPTGKFFIGGPDGDAGLTGRKIIVDTYGGAAPHGGGAFSGKDPTKVDRSAAYAARYLAKNIVAAGLADRCTLQLAYAIGVARPLSIYIDTHGTGKAPEDTLERIVSEAMDLTPRGIRKHLDLNRPIYARTSSYGHFGRTPDNEGGFSWEKTDLAEVLKRAV</sequence>
<gene>
    <name evidence="1" type="primary">metK</name>
    <name type="ordered locus">Nham_2753</name>
</gene>
<accession>Q1QJR5</accession>
<comment type="function">
    <text evidence="1">Catalyzes the formation of S-adenosylmethionine (AdoMet) from methionine and ATP. The overall synthetic reaction is composed of two sequential steps, AdoMet formation and the subsequent tripolyphosphate hydrolysis which occurs prior to release of AdoMet from the enzyme.</text>
</comment>
<comment type="catalytic activity">
    <reaction evidence="1">
        <text>L-methionine + ATP + H2O = S-adenosyl-L-methionine + phosphate + diphosphate</text>
        <dbReference type="Rhea" id="RHEA:21080"/>
        <dbReference type="ChEBI" id="CHEBI:15377"/>
        <dbReference type="ChEBI" id="CHEBI:30616"/>
        <dbReference type="ChEBI" id="CHEBI:33019"/>
        <dbReference type="ChEBI" id="CHEBI:43474"/>
        <dbReference type="ChEBI" id="CHEBI:57844"/>
        <dbReference type="ChEBI" id="CHEBI:59789"/>
        <dbReference type="EC" id="2.5.1.6"/>
    </reaction>
</comment>
<comment type="cofactor">
    <cofactor evidence="1">
        <name>Mg(2+)</name>
        <dbReference type="ChEBI" id="CHEBI:18420"/>
    </cofactor>
    <text evidence="1">Binds 2 divalent ions per subunit.</text>
</comment>
<comment type="cofactor">
    <cofactor evidence="1">
        <name>K(+)</name>
        <dbReference type="ChEBI" id="CHEBI:29103"/>
    </cofactor>
    <text evidence="1">Binds 1 potassium ion per subunit.</text>
</comment>
<comment type="pathway">
    <text evidence="1">Amino-acid biosynthesis; S-adenosyl-L-methionine biosynthesis; S-adenosyl-L-methionine from L-methionine: step 1/1.</text>
</comment>
<comment type="subunit">
    <text evidence="1">Homotetramer; dimer of dimers.</text>
</comment>
<comment type="subcellular location">
    <subcellularLocation>
        <location evidence="1">Cytoplasm</location>
    </subcellularLocation>
</comment>
<comment type="similarity">
    <text evidence="1">Belongs to the AdoMet synthase family.</text>
</comment>